<organism>
    <name type="scientific">Bacillus subtilis (strain 168)</name>
    <dbReference type="NCBI Taxonomy" id="224308"/>
    <lineage>
        <taxon>Bacteria</taxon>
        <taxon>Bacillati</taxon>
        <taxon>Bacillota</taxon>
        <taxon>Bacilli</taxon>
        <taxon>Bacillales</taxon>
        <taxon>Bacillaceae</taxon>
        <taxon>Bacillus</taxon>
    </lineage>
</organism>
<reference key="1">
    <citation type="submission" date="1997-03" db="EMBL/GenBank/DDBJ databases">
        <title>A 148 kbp sequence of the region between 35 and 47 degree of the Bacillus subtilis genome.</title>
        <authorList>
            <person name="Kasahara Y."/>
            <person name="Nakai S."/>
            <person name="Lee S."/>
            <person name="Sadaie Y."/>
            <person name="Ogasawara N."/>
        </authorList>
    </citation>
    <scope>NUCLEOTIDE SEQUENCE [GENOMIC DNA]</scope>
    <source>
        <strain>168</strain>
    </source>
</reference>
<reference key="2">
    <citation type="journal article" date="1997" name="Nature">
        <title>The complete genome sequence of the Gram-positive bacterium Bacillus subtilis.</title>
        <authorList>
            <person name="Kunst F."/>
            <person name="Ogasawara N."/>
            <person name="Moszer I."/>
            <person name="Albertini A.M."/>
            <person name="Alloni G."/>
            <person name="Azevedo V."/>
            <person name="Bertero M.G."/>
            <person name="Bessieres P."/>
            <person name="Bolotin A."/>
            <person name="Borchert S."/>
            <person name="Borriss R."/>
            <person name="Boursier L."/>
            <person name="Brans A."/>
            <person name="Braun M."/>
            <person name="Brignell S.C."/>
            <person name="Bron S."/>
            <person name="Brouillet S."/>
            <person name="Bruschi C.V."/>
            <person name="Caldwell B."/>
            <person name="Capuano V."/>
            <person name="Carter N.M."/>
            <person name="Choi S.-K."/>
            <person name="Codani J.-J."/>
            <person name="Connerton I.F."/>
            <person name="Cummings N.J."/>
            <person name="Daniel R.A."/>
            <person name="Denizot F."/>
            <person name="Devine K.M."/>
            <person name="Duesterhoeft A."/>
            <person name="Ehrlich S.D."/>
            <person name="Emmerson P.T."/>
            <person name="Entian K.-D."/>
            <person name="Errington J."/>
            <person name="Fabret C."/>
            <person name="Ferrari E."/>
            <person name="Foulger D."/>
            <person name="Fritz C."/>
            <person name="Fujita M."/>
            <person name="Fujita Y."/>
            <person name="Fuma S."/>
            <person name="Galizzi A."/>
            <person name="Galleron N."/>
            <person name="Ghim S.-Y."/>
            <person name="Glaser P."/>
            <person name="Goffeau A."/>
            <person name="Golightly E.J."/>
            <person name="Grandi G."/>
            <person name="Guiseppi G."/>
            <person name="Guy B.J."/>
            <person name="Haga K."/>
            <person name="Haiech J."/>
            <person name="Harwood C.R."/>
            <person name="Henaut A."/>
            <person name="Hilbert H."/>
            <person name="Holsappel S."/>
            <person name="Hosono S."/>
            <person name="Hullo M.-F."/>
            <person name="Itaya M."/>
            <person name="Jones L.-M."/>
            <person name="Joris B."/>
            <person name="Karamata D."/>
            <person name="Kasahara Y."/>
            <person name="Klaerr-Blanchard M."/>
            <person name="Klein C."/>
            <person name="Kobayashi Y."/>
            <person name="Koetter P."/>
            <person name="Koningstein G."/>
            <person name="Krogh S."/>
            <person name="Kumano M."/>
            <person name="Kurita K."/>
            <person name="Lapidus A."/>
            <person name="Lardinois S."/>
            <person name="Lauber J."/>
            <person name="Lazarevic V."/>
            <person name="Lee S.-M."/>
            <person name="Levine A."/>
            <person name="Liu H."/>
            <person name="Masuda S."/>
            <person name="Mauel C."/>
            <person name="Medigue C."/>
            <person name="Medina N."/>
            <person name="Mellado R.P."/>
            <person name="Mizuno M."/>
            <person name="Moestl D."/>
            <person name="Nakai S."/>
            <person name="Noback M."/>
            <person name="Noone D."/>
            <person name="O'Reilly M."/>
            <person name="Ogawa K."/>
            <person name="Ogiwara A."/>
            <person name="Oudega B."/>
            <person name="Park S.-H."/>
            <person name="Parro V."/>
            <person name="Pohl T.M."/>
            <person name="Portetelle D."/>
            <person name="Porwollik S."/>
            <person name="Prescott A.M."/>
            <person name="Presecan E."/>
            <person name="Pujic P."/>
            <person name="Purnelle B."/>
            <person name="Rapoport G."/>
            <person name="Rey M."/>
            <person name="Reynolds S."/>
            <person name="Rieger M."/>
            <person name="Rivolta C."/>
            <person name="Rocha E."/>
            <person name="Roche B."/>
            <person name="Rose M."/>
            <person name="Sadaie Y."/>
            <person name="Sato T."/>
            <person name="Scanlan E."/>
            <person name="Schleich S."/>
            <person name="Schroeter R."/>
            <person name="Scoffone F."/>
            <person name="Sekiguchi J."/>
            <person name="Sekowska A."/>
            <person name="Seror S.J."/>
            <person name="Serror P."/>
            <person name="Shin B.-S."/>
            <person name="Soldo B."/>
            <person name="Sorokin A."/>
            <person name="Tacconi E."/>
            <person name="Takagi T."/>
            <person name="Takahashi H."/>
            <person name="Takemaru K."/>
            <person name="Takeuchi M."/>
            <person name="Tamakoshi A."/>
            <person name="Tanaka T."/>
            <person name="Terpstra P."/>
            <person name="Tognoni A."/>
            <person name="Tosato V."/>
            <person name="Uchiyama S."/>
            <person name="Vandenbol M."/>
            <person name="Vannier F."/>
            <person name="Vassarotti A."/>
            <person name="Viari A."/>
            <person name="Wambutt R."/>
            <person name="Wedler E."/>
            <person name="Wedler H."/>
            <person name="Weitzenegger T."/>
            <person name="Winters P."/>
            <person name="Wipat A."/>
            <person name="Yamamoto H."/>
            <person name="Yamane K."/>
            <person name="Yasumoto K."/>
            <person name="Yata K."/>
            <person name="Yoshida K."/>
            <person name="Yoshikawa H.-F."/>
            <person name="Zumstein E."/>
            <person name="Yoshikawa H."/>
            <person name="Danchin A."/>
        </authorList>
    </citation>
    <scope>NUCLEOTIDE SEQUENCE [LARGE SCALE GENOMIC DNA]</scope>
    <source>
        <strain>168</strain>
    </source>
</reference>
<reference key="3">
    <citation type="journal article" date="2007" name="Mol. Microbiol.">
        <title>Identification and characterization of the immunity repressor (ImmR) that controls the mobile genetic element ICEBs1 of Bacillus subtilis.</title>
        <authorList>
            <person name="Auchtung J.M."/>
            <person name="Lee C.A."/>
            <person name="Garrison K.L."/>
            <person name="Grossman A.D."/>
        </authorList>
    </citation>
    <scope>FUNCTION</scope>
</reference>
<reference key="4">
    <citation type="journal article" date="2008" name="Mol. Microbiol.">
        <title>A conserved anti-repressor controls horizontal gene transfer by proteolysis.</title>
        <authorList>
            <person name="Bose B."/>
            <person name="Auchtung J.M."/>
            <person name="Lee C.A."/>
            <person name="Grossman A.D."/>
        </authorList>
    </citation>
    <scope>CLEAVAGE BY IMMA</scope>
    <scope>INTERACTION WITH IMMA</scope>
</reference>
<keyword id="KW-0002">3D-structure</keyword>
<keyword id="KW-0238">DNA-binding</keyword>
<keyword id="KW-1185">Reference proteome</keyword>
<keyword id="KW-0804">Transcription</keyword>
<keyword id="KW-0805">Transcription regulation</keyword>
<protein>
    <recommendedName>
        <fullName>HTH-type transcriptional regulator ImmR</fullName>
    </recommendedName>
</protein>
<name>IMMR_BACSU</name>
<feature type="chain" id="PRO_0000149749" description="HTH-type transcriptional regulator ImmR">
    <location>
        <begin position="1"/>
        <end position="127"/>
    </location>
</feature>
<feature type="domain" description="HTH cro/C1-type" evidence="1">
    <location>
        <begin position="7"/>
        <end position="61"/>
    </location>
</feature>
<feature type="DNA-binding region" description="H-T-H motif" evidence="1">
    <location>
        <begin position="18"/>
        <end position="37"/>
    </location>
</feature>
<feature type="region of interest" description="Disordered" evidence="2">
    <location>
        <begin position="1"/>
        <end position="22"/>
    </location>
</feature>
<feature type="compositionally biased region" description="Basic and acidic residues" evidence="2">
    <location>
        <begin position="1"/>
        <end position="12"/>
    </location>
</feature>
<feature type="helix" evidence="3">
    <location>
        <begin position="3"/>
        <end position="14"/>
    </location>
</feature>
<feature type="helix" evidence="3">
    <location>
        <begin position="18"/>
        <end position="25"/>
    </location>
</feature>
<feature type="helix" evidence="3">
    <location>
        <begin position="29"/>
        <end position="36"/>
    </location>
</feature>
<feature type="helix" evidence="3">
    <location>
        <begin position="44"/>
        <end position="54"/>
    </location>
</feature>
<feature type="helix" evidence="3">
    <location>
        <begin position="58"/>
        <end position="62"/>
    </location>
</feature>
<evidence type="ECO:0000255" key="1">
    <source>
        <dbReference type="PROSITE-ProRule" id="PRU00257"/>
    </source>
</evidence>
<evidence type="ECO:0000256" key="2">
    <source>
        <dbReference type="SAM" id="MobiDB-lite"/>
    </source>
</evidence>
<evidence type="ECO:0007829" key="3">
    <source>
        <dbReference type="PDB" id="7T8I"/>
    </source>
</evidence>
<gene>
    <name type="primary">immR</name>
    <name type="synonym">ydcN</name>
    <name type="ordered locus">BSU04820</name>
</gene>
<proteinExistence type="evidence at protein level"/>
<dbReference type="EMBL" id="AB001488">
    <property type="protein sequence ID" value="BAA19320.1"/>
    <property type="molecule type" value="Genomic_DNA"/>
</dbReference>
<dbReference type="EMBL" id="AL009126">
    <property type="protein sequence ID" value="CAB12289.1"/>
    <property type="molecule type" value="Genomic_DNA"/>
</dbReference>
<dbReference type="PIR" id="C69774">
    <property type="entry name" value="C69774"/>
</dbReference>
<dbReference type="RefSeq" id="NP_388363.1">
    <property type="nucleotide sequence ID" value="NC_000964.3"/>
</dbReference>
<dbReference type="RefSeq" id="WP_003240393.1">
    <property type="nucleotide sequence ID" value="NZ_OZ025638.1"/>
</dbReference>
<dbReference type="PDB" id="7T8I">
    <property type="method" value="X-ray"/>
    <property type="resolution" value="2.10 A"/>
    <property type="chains" value="A/B=1-64"/>
</dbReference>
<dbReference type="PDBsum" id="7T8I"/>
<dbReference type="SMR" id="P96631"/>
<dbReference type="FunCoup" id="P96631">
    <property type="interactions" value="23"/>
</dbReference>
<dbReference type="STRING" id="224308.BSU04820"/>
<dbReference type="PaxDb" id="224308-BSU04820"/>
<dbReference type="EnsemblBacteria" id="CAB12289">
    <property type="protein sequence ID" value="CAB12289"/>
    <property type="gene ID" value="BSU_04820"/>
</dbReference>
<dbReference type="GeneID" id="938150"/>
<dbReference type="KEGG" id="bsu:BSU04820"/>
<dbReference type="PATRIC" id="fig|224308.179.peg.512"/>
<dbReference type="eggNOG" id="COG1396">
    <property type="taxonomic scope" value="Bacteria"/>
</dbReference>
<dbReference type="InParanoid" id="P96631"/>
<dbReference type="OrthoDB" id="5190137at2"/>
<dbReference type="PhylomeDB" id="P96631"/>
<dbReference type="BioCyc" id="BSUB:BSU04820-MONOMER"/>
<dbReference type="Proteomes" id="UP000001570">
    <property type="component" value="Chromosome"/>
</dbReference>
<dbReference type="GO" id="GO:0003677">
    <property type="term" value="F:DNA binding"/>
    <property type="evidence" value="ECO:0007669"/>
    <property type="project" value="UniProtKB-KW"/>
</dbReference>
<dbReference type="CDD" id="cd00093">
    <property type="entry name" value="HTH_XRE"/>
    <property type="match status" value="1"/>
</dbReference>
<dbReference type="Gene3D" id="1.10.260.40">
    <property type="entry name" value="lambda repressor-like DNA-binding domains"/>
    <property type="match status" value="1"/>
</dbReference>
<dbReference type="InterPro" id="IPR001387">
    <property type="entry name" value="Cro/C1-type_HTH"/>
</dbReference>
<dbReference type="InterPro" id="IPR010982">
    <property type="entry name" value="Lambda_DNA-bd_dom_sf"/>
</dbReference>
<dbReference type="PANTHER" id="PTHR46558:SF13">
    <property type="entry name" value="HTH-TYPE TRANSCRIPTIONAL REGULATOR IMMR"/>
    <property type="match status" value="1"/>
</dbReference>
<dbReference type="PANTHER" id="PTHR46558">
    <property type="entry name" value="TRACRIPTIONAL REGULATORY PROTEIN-RELATED-RELATED"/>
    <property type="match status" value="1"/>
</dbReference>
<dbReference type="Pfam" id="PF01381">
    <property type="entry name" value="HTH_3"/>
    <property type="match status" value="1"/>
</dbReference>
<dbReference type="SMART" id="SM00530">
    <property type="entry name" value="HTH_XRE"/>
    <property type="match status" value="1"/>
</dbReference>
<dbReference type="SUPFAM" id="SSF47413">
    <property type="entry name" value="lambda repressor-like DNA-binding domains"/>
    <property type="match status" value="1"/>
</dbReference>
<dbReference type="PROSITE" id="PS50943">
    <property type="entry name" value="HTH_CROC1"/>
    <property type="match status" value="1"/>
</dbReference>
<accession>P96631</accession>
<sequence length="127" mass="14649">MSLGKRLKEARQKAGYTQKEAAEKLNIGNNNLSNYERDYRDPDTDTLLKLSNLYNVSTDYLLGKDEVSKKNETDLLNKTINEAIQELKDEDTLLFMNDGEFDEETARLVKKALKNGIKFIDELKKKE</sequence>